<gene>
    <name evidence="8 12" type="primary">fig</name>
    <name type="ORF">CG7615</name>
</gene>
<accession>Q9VAH4</accession>
<accession>A8MPH7</accession>
<accession>Q8SWZ0</accession>
<feature type="chain" id="PRO_0000377398" description="Protein phosphatase PTC7 homolog fig">
    <location>
        <begin position="1"/>
        <end position="314"/>
    </location>
</feature>
<feature type="domain" description="PPM-type phosphatase" evidence="3">
    <location>
        <begin position="43"/>
        <end position="309"/>
    </location>
</feature>
<feature type="binding site" evidence="1">
    <location>
        <position position="87"/>
    </location>
    <ligand>
        <name>Mn(2+)</name>
        <dbReference type="ChEBI" id="CHEBI:29035"/>
        <label>1</label>
    </ligand>
</feature>
<feature type="binding site" evidence="1">
    <location>
        <position position="87"/>
    </location>
    <ligand>
        <name>Mn(2+)</name>
        <dbReference type="ChEBI" id="CHEBI:29035"/>
        <label>2</label>
    </ligand>
</feature>
<feature type="binding site" evidence="1">
    <location>
        <position position="88"/>
    </location>
    <ligand>
        <name>Mn(2+)</name>
        <dbReference type="ChEBI" id="CHEBI:29035"/>
        <label>1</label>
    </ligand>
</feature>
<feature type="binding site" evidence="1">
    <location>
        <position position="232"/>
    </location>
    <ligand>
        <name>Mn(2+)</name>
        <dbReference type="ChEBI" id="CHEBI:29035"/>
        <label>2</label>
    </ligand>
</feature>
<feature type="splice variant" id="VSP_053111" description="In isoform beta." evidence="6">
    <location>
        <begin position="1"/>
        <end position="152"/>
    </location>
</feature>
<sequence length="314" mass="34838">MITCLRNWPLLLKRFSVHQIHQFTQLSGRFERPPQSGKSSRDPYLVTVVQGRSKKPRFPGERSNQRFGEDSWFVSSTPLAEVMGVADGVGGWRDLGVDAGRFAKELMSCCSGQTQLSDFDGRSPRNMLIAGFQELSHREHPVVGSSTACLATMHRKDCTLYTANLGDSGFLVVRNGRVLHRSVEQTHDFNTPYQLTVPPEDRKESYYCDKPEMAVSTRHSLLPGDLVLLATDGLFDNMPESMLLSILNGLKERGEHDLLVGASRVVEKARELSMNASFQSPFAIKARQHNVSYSGGGKPDDITLILSSVEVPNA</sequence>
<dbReference type="EC" id="3.1.3.16"/>
<dbReference type="EMBL" id="DQ858472">
    <property type="protein sequence ID" value="ABI74754.1"/>
    <property type="molecule type" value="mRNA"/>
</dbReference>
<dbReference type="EMBL" id="DQ858473">
    <property type="protein sequence ID" value="ABI74755.1"/>
    <property type="molecule type" value="mRNA"/>
</dbReference>
<dbReference type="EMBL" id="AE014297">
    <property type="protein sequence ID" value="AAF56936.1"/>
    <property type="molecule type" value="Genomic_DNA"/>
</dbReference>
<dbReference type="EMBL" id="AY094942">
    <property type="protein sequence ID" value="AAM11295.1"/>
    <property type="status" value="ALT_FRAME"/>
    <property type="molecule type" value="mRNA"/>
</dbReference>
<dbReference type="EMBL" id="BT044569">
    <property type="protein sequence ID" value="ACI16531.1"/>
    <property type="molecule type" value="mRNA"/>
</dbReference>
<dbReference type="RefSeq" id="NP_651724.1">
    <molecule id="Q9VAH4-1"/>
    <property type="nucleotide sequence ID" value="NM_143467.4"/>
</dbReference>
<dbReference type="SMR" id="Q9VAH4"/>
<dbReference type="BioGRID" id="68375">
    <property type="interactions" value="1"/>
</dbReference>
<dbReference type="FunCoup" id="Q9VAH4">
    <property type="interactions" value="99"/>
</dbReference>
<dbReference type="IntAct" id="Q9VAH4">
    <property type="interactions" value="7"/>
</dbReference>
<dbReference type="STRING" id="7227.FBpp0084904"/>
<dbReference type="PaxDb" id="7227-FBpp0084904"/>
<dbReference type="DNASU" id="43511"/>
<dbReference type="EnsemblMetazoa" id="FBtr0085538">
    <molecule id="Q9VAH4-1"/>
    <property type="protein sequence ID" value="FBpp0084904"/>
    <property type="gene ID" value="FBgn0039694"/>
</dbReference>
<dbReference type="GeneID" id="43511"/>
<dbReference type="KEGG" id="dme:Dmel_CG7615"/>
<dbReference type="UCSC" id="CG7615-RA">
    <molecule id="Q9VAH4-1"/>
    <property type="organism name" value="d. melanogaster"/>
</dbReference>
<dbReference type="AGR" id="FB:FBgn0039694"/>
<dbReference type="CTD" id="43511"/>
<dbReference type="FlyBase" id="FBgn0039694">
    <property type="gene designation" value="fig"/>
</dbReference>
<dbReference type="VEuPathDB" id="VectorBase:FBgn0039694"/>
<dbReference type="eggNOG" id="KOG1379">
    <property type="taxonomic scope" value="Eukaryota"/>
</dbReference>
<dbReference type="GeneTree" id="ENSGT00390000011937"/>
<dbReference type="HOGENOM" id="CLU_029404_3_0_1"/>
<dbReference type="InParanoid" id="Q9VAH4"/>
<dbReference type="OMA" id="DSWFVSS"/>
<dbReference type="OrthoDB" id="60843at2759"/>
<dbReference type="PhylomeDB" id="Q9VAH4"/>
<dbReference type="SignaLink" id="Q9VAH4"/>
<dbReference type="BioGRID-ORCS" id="43511">
    <property type="hits" value="0 hits in 3 CRISPR screens"/>
</dbReference>
<dbReference type="GenomeRNAi" id="43511"/>
<dbReference type="PRO" id="PR:Q9VAH4"/>
<dbReference type="Proteomes" id="UP000000803">
    <property type="component" value="Chromosome 3R"/>
</dbReference>
<dbReference type="Bgee" id="FBgn0039694">
    <property type="expression patterns" value="Expressed in mid-late elongation-stage spermatid (Drosophila) in testis and 28 other cell types or tissues"/>
</dbReference>
<dbReference type="GO" id="GO:0005759">
    <property type="term" value="C:mitochondrial matrix"/>
    <property type="evidence" value="ECO:0000250"/>
    <property type="project" value="FlyBase"/>
</dbReference>
<dbReference type="GO" id="GO:0005739">
    <property type="term" value="C:mitochondrion"/>
    <property type="evidence" value="ECO:0000318"/>
    <property type="project" value="GO_Central"/>
</dbReference>
<dbReference type="GO" id="GO:0046872">
    <property type="term" value="F:metal ion binding"/>
    <property type="evidence" value="ECO:0007669"/>
    <property type="project" value="UniProtKB-KW"/>
</dbReference>
<dbReference type="GO" id="GO:0004721">
    <property type="term" value="F:phosphoprotein phosphatase activity"/>
    <property type="evidence" value="ECO:0000250"/>
    <property type="project" value="FlyBase"/>
</dbReference>
<dbReference type="GO" id="GO:0004722">
    <property type="term" value="F:protein serine/threonine phosphatase activity"/>
    <property type="evidence" value="ECO:0000250"/>
    <property type="project" value="UniProtKB"/>
</dbReference>
<dbReference type="GO" id="GO:1904775">
    <property type="term" value="P:positive regulation of ubiquinone biosynthetic process"/>
    <property type="evidence" value="ECO:0000250"/>
    <property type="project" value="FlyBase"/>
</dbReference>
<dbReference type="GO" id="GO:0010795">
    <property type="term" value="P:regulation of ubiquinone biosynthetic process"/>
    <property type="evidence" value="ECO:0000318"/>
    <property type="project" value="GO_Central"/>
</dbReference>
<dbReference type="FunFam" id="3.60.40.10:FF:000009">
    <property type="entry name" value="Blast:Protein phosphatase PTC7 homolog"/>
    <property type="match status" value="1"/>
</dbReference>
<dbReference type="Gene3D" id="3.60.40.10">
    <property type="entry name" value="PPM-type phosphatase domain"/>
    <property type="match status" value="1"/>
</dbReference>
<dbReference type="InterPro" id="IPR036457">
    <property type="entry name" value="PPM-type-like_dom_sf"/>
</dbReference>
<dbReference type="InterPro" id="IPR001932">
    <property type="entry name" value="PPM-type_phosphatase-like_dom"/>
</dbReference>
<dbReference type="InterPro" id="IPR039123">
    <property type="entry name" value="PPTC7"/>
</dbReference>
<dbReference type="PANTHER" id="PTHR12320">
    <property type="entry name" value="PROTEIN PHOSPHATASE 2C"/>
    <property type="match status" value="1"/>
</dbReference>
<dbReference type="PANTHER" id="PTHR12320:SF1">
    <property type="entry name" value="PROTEIN PHOSPHATASE PTC7 HOMOLOG"/>
    <property type="match status" value="1"/>
</dbReference>
<dbReference type="Pfam" id="PF13672">
    <property type="entry name" value="PP2C_2"/>
    <property type="match status" value="1"/>
</dbReference>
<dbReference type="SMART" id="SM00331">
    <property type="entry name" value="PP2C_SIG"/>
    <property type="match status" value="1"/>
</dbReference>
<dbReference type="SMART" id="SM00332">
    <property type="entry name" value="PP2Cc"/>
    <property type="match status" value="1"/>
</dbReference>
<dbReference type="SUPFAM" id="SSF81606">
    <property type="entry name" value="PP2C-like"/>
    <property type="match status" value="1"/>
</dbReference>
<dbReference type="PROSITE" id="PS51746">
    <property type="entry name" value="PPM_2"/>
    <property type="match status" value="1"/>
</dbReference>
<comment type="catalytic activity">
    <reaction>
        <text>O-phospho-L-seryl-[protein] + H2O = L-seryl-[protein] + phosphate</text>
        <dbReference type="Rhea" id="RHEA:20629"/>
        <dbReference type="Rhea" id="RHEA-COMP:9863"/>
        <dbReference type="Rhea" id="RHEA-COMP:11604"/>
        <dbReference type="ChEBI" id="CHEBI:15377"/>
        <dbReference type="ChEBI" id="CHEBI:29999"/>
        <dbReference type="ChEBI" id="CHEBI:43474"/>
        <dbReference type="ChEBI" id="CHEBI:83421"/>
        <dbReference type="EC" id="3.1.3.16"/>
    </reaction>
</comment>
<comment type="catalytic activity">
    <reaction>
        <text>O-phospho-L-threonyl-[protein] + H2O = L-threonyl-[protein] + phosphate</text>
        <dbReference type="Rhea" id="RHEA:47004"/>
        <dbReference type="Rhea" id="RHEA-COMP:11060"/>
        <dbReference type="Rhea" id="RHEA-COMP:11605"/>
        <dbReference type="ChEBI" id="CHEBI:15377"/>
        <dbReference type="ChEBI" id="CHEBI:30013"/>
        <dbReference type="ChEBI" id="CHEBI:43474"/>
        <dbReference type="ChEBI" id="CHEBI:61977"/>
        <dbReference type="EC" id="3.1.3.16"/>
    </reaction>
</comment>
<comment type="cofactor">
    <cofactor evidence="1 7">
        <name>Mg(2+)</name>
        <dbReference type="ChEBI" id="CHEBI:18420"/>
    </cofactor>
    <cofactor evidence="1 7">
        <name>Mn(2+)</name>
        <dbReference type="ChEBI" id="CHEBI:29035"/>
    </cofactor>
</comment>
<comment type="alternative products">
    <event type="alternative promoter"/>
    <isoform>
        <id>Q9VAH4-1</id>
        <name evidence="5">alpha</name>
        <sequence type="displayed"/>
    </isoform>
    <isoform>
        <id>Q9VAH4-2</id>
        <name evidence="5">beta</name>
        <sequence type="described" ref="VSP_053111"/>
    </isoform>
</comment>
<comment type="developmental stage">
    <text evidence="5">Isoform alpha and isoform beta are expressed both maternally and zygotically. Zygotic expression is present throughout embryogenesis and fades by first larval instar. Expression levels at all stages are low.</text>
</comment>
<comment type="similarity">
    <text evidence="2">Belongs to the PP2C family.</text>
</comment>
<comment type="sequence caution" evidence="7">
    <conflict type="frameshift">
        <sequence resource="EMBL-CDS" id="AAM11295"/>
    </conflict>
</comment>
<organism>
    <name type="scientific">Drosophila melanogaster</name>
    <name type="common">Fruit fly</name>
    <dbReference type="NCBI Taxonomy" id="7227"/>
    <lineage>
        <taxon>Eukaryota</taxon>
        <taxon>Metazoa</taxon>
        <taxon>Ecdysozoa</taxon>
        <taxon>Arthropoda</taxon>
        <taxon>Hexapoda</taxon>
        <taxon>Insecta</taxon>
        <taxon>Pterygota</taxon>
        <taxon>Neoptera</taxon>
        <taxon>Endopterygota</taxon>
        <taxon>Diptera</taxon>
        <taxon>Brachycera</taxon>
        <taxon>Muscomorpha</taxon>
        <taxon>Ephydroidea</taxon>
        <taxon>Drosophilidae</taxon>
        <taxon>Drosophila</taxon>
        <taxon>Sophophora</taxon>
    </lineage>
</organism>
<proteinExistence type="evidence at transcript level"/>
<protein>
    <recommendedName>
        <fullName>Protein phosphatase PTC7 homolog fig</fullName>
    </recommendedName>
    <alternativeName>
        <fullName>Fos intronic gene protein</fullName>
        <ecNumber>3.1.3.16</ecNumber>
    </alternativeName>
</protein>
<name>PTC71_DROME</name>
<evidence type="ECO:0000250" key="1">
    <source>
        <dbReference type="UniProtKB" id="P35813"/>
    </source>
</evidence>
<evidence type="ECO:0000255" key="2"/>
<evidence type="ECO:0000255" key="3">
    <source>
        <dbReference type="PROSITE-ProRule" id="PRU01082"/>
    </source>
</evidence>
<evidence type="ECO:0000269" key="4">
    <source>
    </source>
</evidence>
<evidence type="ECO:0000269" key="5">
    <source>
    </source>
</evidence>
<evidence type="ECO:0000303" key="6">
    <source>
    </source>
</evidence>
<evidence type="ECO:0000305" key="7"/>
<evidence type="ECO:0000312" key="8">
    <source>
        <dbReference type="EMBL" id="AAF56936.1"/>
    </source>
</evidence>
<evidence type="ECO:0000312" key="9">
    <source>
        <dbReference type="EMBL" id="AAM11295.1"/>
    </source>
</evidence>
<evidence type="ECO:0000312" key="10">
    <source>
        <dbReference type="EMBL" id="ABI74754.1"/>
    </source>
</evidence>
<evidence type="ECO:0000312" key="11">
    <source>
        <dbReference type="EMBL" id="ACI16531.1"/>
    </source>
</evidence>
<evidence type="ECO:0000312" key="12">
    <source>
        <dbReference type="FlyBase" id="FBgn0039694"/>
    </source>
</evidence>
<reference evidence="7 10" key="1">
    <citation type="journal article" date="2008" name="Gene">
        <title>The gene structure of the Drosophila melanogaster proto-oncogene, kayak, and its nested gene, fos-intronic gene.</title>
        <authorList>
            <person name="Hudson S.G."/>
            <person name="Goldstein E.S."/>
        </authorList>
    </citation>
    <scope>NUCLEOTIDE SEQUENCE [MRNA] (ISOFORMS ALPHA AND BETA)</scope>
    <scope>ALTERNATIVE PROMOTER USAGE</scope>
    <scope>DEVELOPMENTAL STAGE</scope>
</reference>
<reference evidence="8" key="2">
    <citation type="journal article" date="2000" name="Science">
        <title>The genome sequence of Drosophila melanogaster.</title>
        <authorList>
            <person name="Adams M.D."/>
            <person name="Celniker S.E."/>
            <person name="Holt R.A."/>
            <person name="Evans C.A."/>
            <person name="Gocayne J.D."/>
            <person name="Amanatides P.G."/>
            <person name="Scherer S.E."/>
            <person name="Li P.W."/>
            <person name="Hoskins R.A."/>
            <person name="Galle R.F."/>
            <person name="George R.A."/>
            <person name="Lewis S.E."/>
            <person name="Richards S."/>
            <person name="Ashburner M."/>
            <person name="Henderson S.N."/>
            <person name="Sutton G.G."/>
            <person name="Wortman J.R."/>
            <person name="Yandell M.D."/>
            <person name="Zhang Q."/>
            <person name="Chen L.X."/>
            <person name="Brandon R.C."/>
            <person name="Rogers Y.-H.C."/>
            <person name="Blazej R.G."/>
            <person name="Champe M."/>
            <person name="Pfeiffer B.D."/>
            <person name="Wan K.H."/>
            <person name="Doyle C."/>
            <person name="Baxter E.G."/>
            <person name="Helt G."/>
            <person name="Nelson C.R."/>
            <person name="Miklos G.L.G."/>
            <person name="Abril J.F."/>
            <person name="Agbayani A."/>
            <person name="An H.-J."/>
            <person name="Andrews-Pfannkoch C."/>
            <person name="Baldwin D."/>
            <person name="Ballew R.M."/>
            <person name="Basu A."/>
            <person name="Baxendale J."/>
            <person name="Bayraktaroglu L."/>
            <person name="Beasley E.M."/>
            <person name="Beeson K.Y."/>
            <person name="Benos P.V."/>
            <person name="Berman B.P."/>
            <person name="Bhandari D."/>
            <person name="Bolshakov S."/>
            <person name="Borkova D."/>
            <person name="Botchan M.R."/>
            <person name="Bouck J."/>
            <person name="Brokstein P."/>
            <person name="Brottier P."/>
            <person name="Burtis K.C."/>
            <person name="Busam D.A."/>
            <person name="Butler H."/>
            <person name="Cadieu E."/>
            <person name="Center A."/>
            <person name="Chandra I."/>
            <person name="Cherry J.M."/>
            <person name="Cawley S."/>
            <person name="Dahlke C."/>
            <person name="Davenport L.B."/>
            <person name="Davies P."/>
            <person name="de Pablos B."/>
            <person name="Delcher A."/>
            <person name="Deng Z."/>
            <person name="Mays A.D."/>
            <person name="Dew I."/>
            <person name="Dietz S.M."/>
            <person name="Dodson K."/>
            <person name="Doup L.E."/>
            <person name="Downes M."/>
            <person name="Dugan-Rocha S."/>
            <person name="Dunkov B.C."/>
            <person name="Dunn P."/>
            <person name="Durbin K.J."/>
            <person name="Evangelista C.C."/>
            <person name="Ferraz C."/>
            <person name="Ferriera S."/>
            <person name="Fleischmann W."/>
            <person name="Fosler C."/>
            <person name="Gabrielian A.E."/>
            <person name="Garg N.S."/>
            <person name="Gelbart W.M."/>
            <person name="Glasser K."/>
            <person name="Glodek A."/>
            <person name="Gong F."/>
            <person name="Gorrell J.H."/>
            <person name="Gu Z."/>
            <person name="Guan P."/>
            <person name="Harris M."/>
            <person name="Harris N.L."/>
            <person name="Harvey D.A."/>
            <person name="Heiman T.J."/>
            <person name="Hernandez J.R."/>
            <person name="Houck J."/>
            <person name="Hostin D."/>
            <person name="Houston K.A."/>
            <person name="Howland T.J."/>
            <person name="Wei M.-H."/>
            <person name="Ibegwam C."/>
            <person name="Jalali M."/>
            <person name="Kalush F."/>
            <person name="Karpen G.H."/>
            <person name="Ke Z."/>
            <person name="Kennison J.A."/>
            <person name="Ketchum K.A."/>
            <person name="Kimmel B.E."/>
            <person name="Kodira C.D."/>
            <person name="Kraft C.L."/>
            <person name="Kravitz S."/>
            <person name="Kulp D."/>
            <person name="Lai Z."/>
            <person name="Lasko P."/>
            <person name="Lei Y."/>
            <person name="Levitsky A.A."/>
            <person name="Li J.H."/>
            <person name="Li Z."/>
            <person name="Liang Y."/>
            <person name="Lin X."/>
            <person name="Liu X."/>
            <person name="Mattei B."/>
            <person name="McIntosh T.C."/>
            <person name="McLeod M.P."/>
            <person name="McPherson D."/>
            <person name="Merkulov G."/>
            <person name="Milshina N.V."/>
            <person name="Mobarry C."/>
            <person name="Morris J."/>
            <person name="Moshrefi A."/>
            <person name="Mount S.M."/>
            <person name="Moy M."/>
            <person name="Murphy B."/>
            <person name="Murphy L."/>
            <person name="Muzny D.M."/>
            <person name="Nelson D.L."/>
            <person name="Nelson D.R."/>
            <person name="Nelson K.A."/>
            <person name="Nixon K."/>
            <person name="Nusskern D.R."/>
            <person name="Pacleb J.M."/>
            <person name="Palazzolo M."/>
            <person name="Pittman G.S."/>
            <person name="Pan S."/>
            <person name="Pollard J."/>
            <person name="Puri V."/>
            <person name="Reese M.G."/>
            <person name="Reinert K."/>
            <person name="Remington K."/>
            <person name="Saunders R.D.C."/>
            <person name="Scheeler F."/>
            <person name="Shen H."/>
            <person name="Shue B.C."/>
            <person name="Siden-Kiamos I."/>
            <person name="Simpson M."/>
            <person name="Skupski M.P."/>
            <person name="Smith T.J."/>
            <person name="Spier E."/>
            <person name="Spradling A.C."/>
            <person name="Stapleton M."/>
            <person name="Strong R."/>
            <person name="Sun E."/>
            <person name="Svirskas R."/>
            <person name="Tector C."/>
            <person name="Turner R."/>
            <person name="Venter E."/>
            <person name="Wang A.H."/>
            <person name="Wang X."/>
            <person name="Wang Z.-Y."/>
            <person name="Wassarman D.A."/>
            <person name="Weinstock G.M."/>
            <person name="Weissenbach J."/>
            <person name="Williams S.M."/>
            <person name="Woodage T."/>
            <person name="Worley K.C."/>
            <person name="Wu D."/>
            <person name="Yang S."/>
            <person name="Yao Q.A."/>
            <person name="Ye J."/>
            <person name="Yeh R.-F."/>
            <person name="Zaveri J.S."/>
            <person name="Zhan M."/>
            <person name="Zhang G."/>
            <person name="Zhao Q."/>
            <person name="Zheng L."/>
            <person name="Zheng X.H."/>
            <person name="Zhong F.N."/>
            <person name="Zhong W."/>
            <person name="Zhou X."/>
            <person name="Zhu S.C."/>
            <person name="Zhu X."/>
            <person name="Smith H.O."/>
            <person name="Gibbs R.A."/>
            <person name="Myers E.W."/>
            <person name="Rubin G.M."/>
            <person name="Venter J.C."/>
        </authorList>
    </citation>
    <scope>NUCLEOTIDE SEQUENCE [LARGE SCALE GENOMIC DNA]</scope>
    <source>
        <strain>Berkeley</strain>
    </source>
</reference>
<reference evidence="7 8" key="3">
    <citation type="journal article" date="2002" name="Genome Biol.">
        <title>Annotation of the Drosophila melanogaster euchromatic genome: a systematic review.</title>
        <authorList>
            <person name="Misra S."/>
            <person name="Crosby M.A."/>
            <person name="Mungall C.J."/>
            <person name="Matthews B.B."/>
            <person name="Campbell K.S."/>
            <person name="Hradecky P."/>
            <person name="Huang Y."/>
            <person name="Kaminker J.S."/>
            <person name="Millburn G.H."/>
            <person name="Prochnik S.E."/>
            <person name="Smith C.D."/>
            <person name="Tupy J.L."/>
            <person name="Whitfield E.J."/>
            <person name="Bayraktaroglu L."/>
            <person name="Berman B.P."/>
            <person name="Bettencourt B.R."/>
            <person name="Celniker S.E."/>
            <person name="de Grey A.D.N.J."/>
            <person name="Drysdale R.A."/>
            <person name="Harris N.L."/>
            <person name="Richter J."/>
            <person name="Russo S."/>
            <person name="Schroeder A.J."/>
            <person name="Shu S.Q."/>
            <person name="Stapleton M."/>
            <person name="Yamada C."/>
            <person name="Ashburner M."/>
            <person name="Gelbart W.M."/>
            <person name="Rubin G.M."/>
            <person name="Lewis S.E."/>
        </authorList>
    </citation>
    <scope>GENOME REANNOTATION</scope>
    <source>
        <strain>Berkeley</strain>
    </source>
</reference>
<reference evidence="9" key="4">
    <citation type="journal article" date="2002" name="Genome Biol.">
        <title>A Drosophila full-length cDNA resource.</title>
        <authorList>
            <person name="Stapleton M."/>
            <person name="Carlson J.W."/>
            <person name="Brokstein P."/>
            <person name="Yu C."/>
            <person name="Champe M."/>
            <person name="George R.A."/>
            <person name="Guarin H."/>
            <person name="Kronmiller B."/>
            <person name="Pacleb J.M."/>
            <person name="Park S."/>
            <person name="Wan K.H."/>
            <person name="Rubin G.M."/>
            <person name="Celniker S.E."/>
        </authorList>
    </citation>
    <scope>NUCLEOTIDE SEQUENCE [LARGE SCALE MRNA] (ISOFORM ALPHA)</scope>
    <source>
        <strain evidence="9">Berkeley</strain>
        <tissue evidence="4">Head</tissue>
    </source>
</reference>
<reference evidence="11" key="5">
    <citation type="submission" date="2008-09" db="EMBL/GenBank/DDBJ databases">
        <authorList>
            <person name="Carlson J.W."/>
            <person name="Booth B."/>
            <person name="Frise E."/>
            <person name="Park S."/>
            <person name="Wan K.H."/>
            <person name="Yu C."/>
            <person name="Celniker S.E."/>
        </authorList>
    </citation>
    <scope>NUCLEOTIDE SEQUENCE [LARGE SCALE MRNA] (ISOFORM ALPHA)</scope>
    <source>
        <strain>Berkeley</strain>
    </source>
</reference>
<keyword id="KW-0877">Alternative promoter usage</keyword>
<keyword id="KW-0378">Hydrolase</keyword>
<keyword id="KW-0460">Magnesium</keyword>
<keyword id="KW-0464">Manganese</keyword>
<keyword id="KW-0479">Metal-binding</keyword>
<keyword id="KW-0904">Protein phosphatase</keyword>
<keyword id="KW-1185">Reference proteome</keyword>